<reference key="1">
    <citation type="journal article" date="2008" name="PLoS Genet.">
        <title>Complete genome sequence of the N2-fixing broad host range endophyte Klebsiella pneumoniae 342 and virulence predictions verified in mice.</title>
        <authorList>
            <person name="Fouts D.E."/>
            <person name="Tyler H.L."/>
            <person name="DeBoy R.T."/>
            <person name="Daugherty S."/>
            <person name="Ren Q."/>
            <person name="Badger J.H."/>
            <person name="Durkin A.S."/>
            <person name="Huot H."/>
            <person name="Shrivastava S."/>
            <person name="Kothari S."/>
            <person name="Dodson R.J."/>
            <person name="Mohamoud Y."/>
            <person name="Khouri H."/>
            <person name="Roesch L.F.W."/>
            <person name="Krogfelt K.A."/>
            <person name="Struve C."/>
            <person name="Triplett E.W."/>
            <person name="Methe B.A."/>
        </authorList>
    </citation>
    <scope>NUCLEOTIDE SEQUENCE [LARGE SCALE GENOMIC DNA]</scope>
    <source>
        <strain>342</strain>
    </source>
</reference>
<dbReference type="EMBL" id="CP000964">
    <property type="protein sequence ID" value="ACI09278.1"/>
    <property type="molecule type" value="Genomic_DNA"/>
</dbReference>
<dbReference type="SMR" id="B5XZE8"/>
<dbReference type="KEGG" id="kpe:KPK_3853"/>
<dbReference type="HOGENOM" id="CLU_018614_3_0_6"/>
<dbReference type="Proteomes" id="UP000001734">
    <property type="component" value="Chromosome"/>
</dbReference>
<dbReference type="GO" id="GO:0005886">
    <property type="term" value="C:plasma membrane"/>
    <property type="evidence" value="ECO:0007669"/>
    <property type="project" value="UniProtKB-SubCell"/>
</dbReference>
<dbReference type="GO" id="GO:0008556">
    <property type="term" value="F:P-type potassium transmembrane transporter activity"/>
    <property type="evidence" value="ECO:0007669"/>
    <property type="project" value="InterPro"/>
</dbReference>
<dbReference type="GO" id="GO:0030955">
    <property type="term" value="F:potassium ion binding"/>
    <property type="evidence" value="ECO:0007669"/>
    <property type="project" value="UniProtKB-UniRule"/>
</dbReference>
<dbReference type="HAMAP" id="MF_00275">
    <property type="entry name" value="KdpA"/>
    <property type="match status" value="1"/>
</dbReference>
<dbReference type="InterPro" id="IPR004623">
    <property type="entry name" value="KdpA"/>
</dbReference>
<dbReference type="NCBIfam" id="TIGR00680">
    <property type="entry name" value="kdpA"/>
    <property type="match status" value="1"/>
</dbReference>
<dbReference type="PANTHER" id="PTHR30607">
    <property type="entry name" value="POTASSIUM-TRANSPORTING ATPASE A CHAIN"/>
    <property type="match status" value="1"/>
</dbReference>
<dbReference type="PANTHER" id="PTHR30607:SF2">
    <property type="entry name" value="POTASSIUM-TRANSPORTING ATPASE POTASSIUM-BINDING SUBUNIT"/>
    <property type="match status" value="1"/>
</dbReference>
<dbReference type="Pfam" id="PF03814">
    <property type="entry name" value="KdpA"/>
    <property type="match status" value="1"/>
</dbReference>
<dbReference type="PIRSF" id="PIRSF001294">
    <property type="entry name" value="K_ATPaseA"/>
    <property type="match status" value="1"/>
</dbReference>
<proteinExistence type="inferred from homology"/>
<gene>
    <name evidence="1" type="primary">kdpA</name>
    <name type="ordered locus">KPK_3853</name>
</gene>
<accession>B5XZE8</accession>
<comment type="function">
    <text evidence="1">Part of the high-affinity ATP-driven potassium transport (or Kdp) system, which catalyzes the hydrolysis of ATP coupled with the electrogenic transport of potassium into the cytoplasm. This subunit binds the periplasmic potassium ions and delivers the ions to the membrane domain of KdpB through an intramembrane tunnel.</text>
</comment>
<comment type="subunit">
    <text evidence="1">The system is composed of three essential subunits: KdpA, KdpB and KdpC.</text>
</comment>
<comment type="subcellular location">
    <subcellularLocation>
        <location evidence="1">Cell inner membrane</location>
        <topology evidence="1">Multi-pass membrane protein</topology>
    </subcellularLocation>
</comment>
<comment type="similarity">
    <text evidence="1">Belongs to the KdpA family.</text>
</comment>
<feature type="chain" id="PRO_1000114687" description="Potassium-transporting ATPase potassium-binding subunit">
    <location>
        <begin position="1"/>
        <end position="559"/>
    </location>
</feature>
<feature type="transmembrane region" description="Helical" evidence="1">
    <location>
        <begin position="5"/>
        <end position="25"/>
    </location>
</feature>
<feature type="transmembrane region" description="Helical" evidence="1">
    <location>
        <begin position="63"/>
        <end position="83"/>
    </location>
</feature>
<feature type="transmembrane region" description="Helical" evidence="1">
    <location>
        <begin position="131"/>
        <end position="151"/>
    </location>
</feature>
<feature type="transmembrane region" description="Helical" evidence="1">
    <location>
        <begin position="173"/>
        <end position="193"/>
    </location>
</feature>
<feature type="transmembrane region" description="Helical" evidence="1">
    <location>
        <begin position="254"/>
        <end position="274"/>
    </location>
</feature>
<feature type="transmembrane region" description="Helical" evidence="1">
    <location>
        <begin position="282"/>
        <end position="302"/>
    </location>
</feature>
<feature type="transmembrane region" description="Helical" evidence="1">
    <location>
        <begin position="327"/>
        <end position="347"/>
    </location>
</feature>
<feature type="transmembrane region" description="Helical" evidence="1">
    <location>
        <begin position="356"/>
        <end position="376"/>
    </location>
</feature>
<feature type="transmembrane region" description="Helical" evidence="1">
    <location>
        <begin position="379"/>
        <end position="399"/>
    </location>
</feature>
<feature type="transmembrane region" description="Helical" evidence="1">
    <location>
        <begin position="416"/>
        <end position="436"/>
    </location>
</feature>
<feature type="transmembrane region" description="Helical" evidence="1">
    <location>
        <begin position="483"/>
        <end position="503"/>
    </location>
</feature>
<feature type="transmembrane region" description="Helical" evidence="1">
    <location>
        <begin position="525"/>
        <end position="545"/>
    </location>
</feature>
<sequence>MAAQGFLLLASYLLVLLVLARPLGTCLARMMNDIPLPGLAGVERVLWRVAGIRAEEMGWLQYLLAILLFNALGGLALFALLMLQGVLPFNPQHLPGLSWDLALNTAVSFVSNTNWQAYAGESTMSYLSQMVGLTVQNFLSAATGIAVVFALTRAFARQKMSALGNAWVDLTRITLWLLLPLSLLVALFFIQQGVPQNLLAYQPFTTLEGAHQLLPMGPVASQEAIKLLGTNGGGFFNANSAHPFENPTALTNLVQMLAIFLIPAALCFAFGEVVSDRRQGRAILWAMTLIFILCVAVVMWAETRGNPHLLTLGADSSLNMEGKESRFGILASSLFAVITTAASCGAVNAMHDSFTALGGMVPMWLMQIGEVVFGGVGSGLYGMLLFVMLAVFIAGLMVGRTPEYLGKKIDVREMKMIALAILVTPTLVLLGTALAMMTDAGRAGMFNPGPHGFSEVLYAVTSAANNNGSAFAGLGAATPFWNLLLAFCMLVGRFAVIIPVMAIAGSLVAKKIQPASPGTLATHDALFIGLLIGTVLLVGALTFIPALALGPLAEHFSLL</sequence>
<evidence type="ECO:0000255" key="1">
    <source>
        <dbReference type="HAMAP-Rule" id="MF_00275"/>
    </source>
</evidence>
<keyword id="KW-0997">Cell inner membrane</keyword>
<keyword id="KW-1003">Cell membrane</keyword>
<keyword id="KW-0406">Ion transport</keyword>
<keyword id="KW-0472">Membrane</keyword>
<keyword id="KW-0630">Potassium</keyword>
<keyword id="KW-0633">Potassium transport</keyword>
<keyword id="KW-0812">Transmembrane</keyword>
<keyword id="KW-1133">Transmembrane helix</keyword>
<keyword id="KW-0813">Transport</keyword>
<organism>
    <name type="scientific">Klebsiella pneumoniae (strain 342)</name>
    <dbReference type="NCBI Taxonomy" id="507522"/>
    <lineage>
        <taxon>Bacteria</taxon>
        <taxon>Pseudomonadati</taxon>
        <taxon>Pseudomonadota</taxon>
        <taxon>Gammaproteobacteria</taxon>
        <taxon>Enterobacterales</taxon>
        <taxon>Enterobacteriaceae</taxon>
        <taxon>Klebsiella/Raoultella group</taxon>
        <taxon>Klebsiella</taxon>
        <taxon>Klebsiella pneumoniae complex</taxon>
    </lineage>
</organism>
<protein>
    <recommendedName>
        <fullName evidence="1">Potassium-transporting ATPase potassium-binding subunit</fullName>
    </recommendedName>
    <alternativeName>
        <fullName evidence="1">ATP phosphohydrolase [potassium-transporting] A chain</fullName>
    </alternativeName>
    <alternativeName>
        <fullName evidence="1">Potassium-binding and translocating subunit A</fullName>
    </alternativeName>
    <alternativeName>
        <fullName evidence="1">Potassium-translocating ATPase A chain</fullName>
    </alternativeName>
</protein>
<name>KDPA_KLEP3</name>